<proteinExistence type="inferred from homology"/>
<accession>B0C1E3</accession>
<organism>
    <name type="scientific">Acaryochloris marina (strain MBIC 11017)</name>
    <dbReference type="NCBI Taxonomy" id="329726"/>
    <lineage>
        <taxon>Bacteria</taxon>
        <taxon>Bacillati</taxon>
        <taxon>Cyanobacteriota</taxon>
        <taxon>Cyanophyceae</taxon>
        <taxon>Acaryochloridales</taxon>
        <taxon>Acaryochloridaceae</taxon>
        <taxon>Acaryochloris</taxon>
    </lineage>
</organism>
<feature type="chain" id="PRO_1000087112" description="Large ribosomal subunit protein uL14">
    <location>
        <begin position="1"/>
        <end position="122"/>
    </location>
</feature>
<reference key="1">
    <citation type="journal article" date="2008" name="Proc. Natl. Acad. Sci. U.S.A.">
        <title>Niche adaptation and genome expansion in the chlorophyll d-producing cyanobacterium Acaryochloris marina.</title>
        <authorList>
            <person name="Swingley W.D."/>
            <person name="Chen M."/>
            <person name="Cheung P.C."/>
            <person name="Conrad A.L."/>
            <person name="Dejesa L.C."/>
            <person name="Hao J."/>
            <person name="Honchak B.M."/>
            <person name="Karbach L.E."/>
            <person name="Kurdoglu A."/>
            <person name="Lahiri S."/>
            <person name="Mastrian S.D."/>
            <person name="Miyashita H."/>
            <person name="Page L."/>
            <person name="Ramakrishna P."/>
            <person name="Satoh S."/>
            <person name="Sattley W.M."/>
            <person name="Shimada Y."/>
            <person name="Taylor H.L."/>
            <person name="Tomo T."/>
            <person name="Tsuchiya T."/>
            <person name="Wang Z.T."/>
            <person name="Raymond J."/>
            <person name="Mimuro M."/>
            <person name="Blankenship R.E."/>
            <person name="Touchman J.W."/>
        </authorList>
    </citation>
    <scope>NUCLEOTIDE SEQUENCE [LARGE SCALE GENOMIC DNA]</scope>
    <source>
        <strain>MBIC 11017</strain>
    </source>
</reference>
<evidence type="ECO:0000255" key="1">
    <source>
        <dbReference type="HAMAP-Rule" id="MF_01367"/>
    </source>
</evidence>
<evidence type="ECO:0000305" key="2"/>
<keyword id="KW-1185">Reference proteome</keyword>
<keyword id="KW-0687">Ribonucleoprotein</keyword>
<keyword id="KW-0689">Ribosomal protein</keyword>
<keyword id="KW-0694">RNA-binding</keyword>
<keyword id="KW-0699">rRNA-binding</keyword>
<gene>
    <name evidence="1" type="primary">rplN</name>
    <name evidence="1" type="synonym">rpl14</name>
    <name type="ordered locus">AM1_4706</name>
</gene>
<dbReference type="EMBL" id="CP000828">
    <property type="protein sequence ID" value="ABW29678.1"/>
    <property type="molecule type" value="Genomic_DNA"/>
</dbReference>
<dbReference type="RefSeq" id="WP_010469308.1">
    <property type="nucleotide sequence ID" value="NC_009925.1"/>
</dbReference>
<dbReference type="SMR" id="B0C1E3"/>
<dbReference type="STRING" id="329726.AM1_4706"/>
<dbReference type="KEGG" id="amr:AM1_4706"/>
<dbReference type="eggNOG" id="COG0093">
    <property type="taxonomic scope" value="Bacteria"/>
</dbReference>
<dbReference type="HOGENOM" id="CLU_095071_2_1_3"/>
<dbReference type="OrthoDB" id="9806379at2"/>
<dbReference type="Proteomes" id="UP000000268">
    <property type="component" value="Chromosome"/>
</dbReference>
<dbReference type="GO" id="GO:0022625">
    <property type="term" value="C:cytosolic large ribosomal subunit"/>
    <property type="evidence" value="ECO:0007669"/>
    <property type="project" value="TreeGrafter"/>
</dbReference>
<dbReference type="GO" id="GO:0070180">
    <property type="term" value="F:large ribosomal subunit rRNA binding"/>
    <property type="evidence" value="ECO:0007669"/>
    <property type="project" value="TreeGrafter"/>
</dbReference>
<dbReference type="GO" id="GO:0003735">
    <property type="term" value="F:structural constituent of ribosome"/>
    <property type="evidence" value="ECO:0007669"/>
    <property type="project" value="InterPro"/>
</dbReference>
<dbReference type="GO" id="GO:0006412">
    <property type="term" value="P:translation"/>
    <property type="evidence" value="ECO:0007669"/>
    <property type="project" value="UniProtKB-UniRule"/>
</dbReference>
<dbReference type="CDD" id="cd00337">
    <property type="entry name" value="Ribosomal_uL14"/>
    <property type="match status" value="1"/>
</dbReference>
<dbReference type="FunFam" id="2.40.150.20:FF:000001">
    <property type="entry name" value="50S ribosomal protein L14"/>
    <property type="match status" value="1"/>
</dbReference>
<dbReference type="Gene3D" id="2.40.150.20">
    <property type="entry name" value="Ribosomal protein L14"/>
    <property type="match status" value="1"/>
</dbReference>
<dbReference type="HAMAP" id="MF_01367">
    <property type="entry name" value="Ribosomal_uL14"/>
    <property type="match status" value="1"/>
</dbReference>
<dbReference type="InterPro" id="IPR000218">
    <property type="entry name" value="Ribosomal_uL14"/>
</dbReference>
<dbReference type="InterPro" id="IPR005745">
    <property type="entry name" value="Ribosomal_uL14_bac-type"/>
</dbReference>
<dbReference type="InterPro" id="IPR019972">
    <property type="entry name" value="Ribosomal_uL14_CS"/>
</dbReference>
<dbReference type="InterPro" id="IPR036853">
    <property type="entry name" value="Ribosomal_uL14_sf"/>
</dbReference>
<dbReference type="NCBIfam" id="TIGR01067">
    <property type="entry name" value="rplN_bact"/>
    <property type="match status" value="1"/>
</dbReference>
<dbReference type="PANTHER" id="PTHR11761">
    <property type="entry name" value="50S/60S RIBOSOMAL PROTEIN L14/L23"/>
    <property type="match status" value="1"/>
</dbReference>
<dbReference type="PANTHER" id="PTHR11761:SF3">
    <property type="entry name" value="LARGE RIBOSOMAL SUBUNIT PROTEIN UL14M"/>
    <property type="match status" value="1"/>
</dbReference>
<dbReference type="Pfam" id="PF00238">
    <property type="entry name" value="Ribosomal_L14"/>
    <property type="match status" value="1"/>
</dbReference>
<dbReference type="SMART" id="SM01374">
    <property type="entry name" value="Ribosomal_L14"/>
    <property type="match status" value="1"/>
</dbReference>
<dbReference type="SUPFAM" id="SSF50193">
    <property type="entry name" value="Ribosomal protein L14"/>
    <property type="match status" value="1"/>
</dbReference>
<dbReference type="PROSITE" id="PS00049">
    <property type="entry name" value="RIBOSOMAL_L14"/>
    <property type="match status" value="1"/>
</dbReference>
<protein>
    <recommendedName>
        <fullName evidence="1">Large ribosomal subunit protein uL14</fullName>
    </recommendedName>
    <alternativeName>
        <fullName evidence="2">50S ribosomal protein L14</fullName>
    </alternativeName>
</protein>
<sequence>MIQQETTLNVADNSGAKRLLCIRVIGGGNRRYGGVGDVIIATVKDATPNMPVKKSDVVRAVIVRTRKSICRESGMSIRFDDNAAVLINPDGNPRGTRVFGPVARELRDKSFTKIVSLAPEVL</sequence>
<name>RL14_ACAM1</name>
<comment type="function">
    <text evidence="1">Binds to 23S rRNA. Forms part of two intersubunit bridges in the 70S ribosome.</text>
</comment>
<comment type="subunit">
    <text evidence="1">Part of the 50S ribosomal subunit. Forms a cluster with proteins L3 and L19. In the 70S ribosome, L14 and L19 interact and together make contacts with the 16S rRNA in bridges B5 and B8.</text>
</comment>
<comment type="similarity">
    <text evidence="1">Belongs to the universal ribosomal protein uL14 family.</text>
</comment>